<organism>
    <name type="scientific">Brucella abortus (strain 2308)</name>
    <dbReference type="NCBI Taxonomy" id="359391"/>
    <lineage>
        <taxon>Bacteria</taxon>
        <taxon>Pseudomonadati</taxon>
        <taxon>Pseudomonadota</taxon>
        <taxon>Alphaproteobacteria</taxon>
        <taxon>Hyphomicrobiales</taxon>
        <taxon>Brucellaceae</taxon>
        <taxon>Brucella/Ochrobactrum group</taxon>
        <taxon>Brucella</taxon>
    </lineage>
</organism>
<reference key="1">
    <citation type="journal article" date="2005" name="Infect. Immun.">
        <title>Whole-genome analyses of speciation events in pathogenic Brucellae.</title>
        <authorList>
            <person name="Chain P.S."/>
            <person name="Comerci D.J."/>
            <person name="Tolmasky M.E."/>
            <person name="Larimer F.W."/>
            <person name="Malfatti S.A."/>
            <person name="Vergez L.M."/>
            <person name="Aguero F."/>
            <person name="Land M.L."/>
            <person name="Ugalde R.A."/>
            <person name="Garcia E."/>
        </authorList>
    </citation>
    <scope>NUCLEOTIDE SEQUENCE [LARGE SCALE GENOMIC DNA]</scope>
    <source>
        <strain>2308</strain>
    </source>
</reference>
<gene>
    <name evidence="1" type="primary">xylA</name>
    <name type="ordered locus">BAB1_0570</name>
</gene>
<comment type="catalytic activity">
    <reaction evidence="1">
        <text>alpha-D-xylose = alpha-D-xylulofuranose</text>
        <dbReference type="Rhea" id="RHEA:22816"/>
        <dbReference type="ChEBI" id="CHEBI:28518"/>
        <dbReference type="ChEBI" id="CHEBI:188998"/>
        <dbReference type="EC" id="5.3.1.5"/>
    </reaction>
</comment>
<comment type="cofactor">
    <cofactor evidence="1">
        <name>Mg(2+)</name>
        <dbReference type="ChEBI" id="CHEBI:18420"/>
    </cofactor>
    <text evidence="1">Binds 2 magnesium ions per subunit.</text>
</comment>
<comment type="subunit">
    <text evidence="1">Homotetramer.</text>
</comment>
<comment type="subcellular location">
    <subcellularLocation>
        <location evidence="1">Cytoplasm</location>
    </subcellularLocation>
</comment>
<comment type="similarity">
    <text evidence="1">Belongs to the xylose isomerase family.</text>
</comment>
<proteinExistence type="inferred from homology"/>
<feature type="chain" id="PRO_0000236959" description="Xylose isomerase">
    <location>
        <begin position="1"/>
        <end position="435"/>
    </location>
</feature>
<feature type="active site" evidence="1">
    <location>
        <position position="100"/>
    </location>
</feature>
<feature type="active site" evidence="1">
    <location>
        <position position="103"/>
    </location>
</feature>
<feature type="binding site" evidence="1">
    <location>
        <position position="231"/>
    </location>
    <ligand>
        <name>Mg(2+)</name>
        <dbReference type="ChEBI" id="CHEBI:18420"/>
        <label>1</label>
    </ligand>
</feature>
<feature type="binding site" evidence="1">
    <location>
        <position position="267"/>
    </location>
    <ligand>
        <name>Mg(2+)</name>
        <dbReference type="ChEBI" id="CHEBI:18420"/>
        <label>1</label>
    </ligand>
</feature>
<feature type="binding site" evidence="1">
    <location>
        <position position="267"/>
    </location>
    <ligand>
        <name>Mg(2+)</name>
        <dbReference type="ChEBI" id="CHEBI:18420"/>
        <label>2</label>
    </ligand>
</feature>
<feature type="binding site" evidence="1">
    <location>
        <position position="270"/>
    </location>
    <ligand>
        <name>Mg(2+)</name>
        <dbReference type="ChEBI" id="CHEBI:18420"/>
        <label>2</label>
    </ligand>
</feature>
<feature type="binding site" evidence="1">
    <location>
        <position position="295"/>
    </location>
    <ligand>
        <name>Mg(2+)</name>
        <dbReference type="ChEBI" id="CHEBI:18420"/>
        <label>1</label>
    </ligand>
</feature>
<feature type="binding site" evidence="1">
    <location>
        <position position="306"/>
    </location>
    <ligand>
        <name>Mg(2+)</name>
        <dbReference type="ChEBI" id="CHEBI:18420"/>
        <label>2</label>
    </ligand>
</feature>
<feature type="binding site" evidence="1">
    <location>
        <position position="308"/>
    </location>
    <ligand>
        <name>Mg(2+)</name>
        <dbReference type="ChEBI" id="CHEBI:18420"/>
        <label>2</label>
    </ligand>
</feature>
<feature type="binding site" evidence="1">
    <location>
        <position position="338"/>
    </location>
    <ligand>
        <name>Mg(2+)</name>
        <dbReference type="ChEBI" id="CHEBI:18420"/>
        <label>1</label>
    </ligand>
</feature>
<keyword id="KW-0119">Carbohydrate metabolism</keyword>
<keyword id="KW-0963">Cytoplasm</keyword>
<keyword id="KW-0413">Isomerase</keyword>
<keyword id="KW-0460">Magnesium</keyword>
<keyword id="KW-0479">Metal-binding</keyword>
<keyword id="KW-1185">Reference proteome</keyword>
<keyword id="KW-0859">Xylose metabolism</keyword>
<sequence>MSTGFFGDIQKVRYEGPESDNPLAFRHYNADEIVLGKRMEDHLRFAVAYWHSFAWEGGDPFGGRTFDRPWFSNEIDAAKLKADVAFEFFSLLGAPYYCFHDADVRPEGRNFAENTRYLNEIVDIFEKKQAETGMKLLWGTANLFSNRRYMAGAATNPDPDVFAFAAATVKTCIDATKRLGGENYVLWGGREGYETLLNTDLSRELDHMGRFLSLVVEYKHKIGFKGTILIEPKPQEPTKHQYDYDVATVYGFLKRYGLENEVKVNIEQGHAILAGHSFEHELALARTLGIFGSIDMNRNDYQSGWDTDQFPNNVPEMALAYYQVLLAGGFTTGGTNFDAKLRRQSLDPQDLLIGHIGGMDCCARGLKAAARMLEDGALSKPLDERYAGWNGEFGKRLLSGLSLDQIAGEVEAKDINPQPKSGRQEYLENIVNRYV</sequence>
<name>XYLA_BRUA2</name>
<dbReference type="EC" id="5.3.1.5" evidence="1"/>
<dbReference type="EMBL" id="AM040264">
    <property type="protein sequence ID" value="CAJ10526.1"/>
    <property type="molecule type" value="Genomic_DNA"/>
</dbReference>
<dbReference type="RefSeq" id="WP_002966715.1">
    <property type="nucleotide sequence ID" value="NZ_KN046823.1"/>
</dbReference>
<dbReference type="SMR" id="Q2YMQ2"/>
<dbReference type="STRING" id="359391.BAB1_0570"/>
<dbReference type="GeneID" id="97534105"/>
<dbReference type="KEGG" id="bmf:BAB1_0570"/>
<dbReference type="PATRIC" id="fig|359391.11.peg.2881"/>
<dbReference type="HOGENOM" id="CLU_037261_1_0_5"/>
<dbReference type="Proteomes" id="UP000002719">
    <property type="component" value="Chromosome I"/>
</dbReference>
<dbReference type="GO" id="GO:0005737">
    <property type="term" value="C:cytoplasm"/>
    <property type="evidence" value="ECO:0007669"/>
    <property type="project" value="UniProtKB-SubCell"/>
</dbReference>
<dbReference type="GO" id="GO:0000287">
    <property type="term" value="F:magnesium ion binding"/>
    <property type="evidence" value="ECO:0007669"/>
    <property type="project" value="UniProtKB-UniRule"/>
</dbReference>
<dbReference type="GO" id="GO:0009045">
    <property type="term" value="F:xylose isomerase activity"/>
    <property type="evidence" value="ECO:0007669"/>
    <property type="project" value="UniProtKB-UniRule"/>
</dbReference>
<dbReference type="GO" id="GO:0042732">
    <property type="term" value="P:D-xylose metabolic process"/>
    <property type="evidence" value="ECO:0007669"/>
    <property type="project" value="UniProtKB-UniRule"/>
</dbReference>
<dbReference type="FunFam" id="3.20.20.150:FF:000002">
    <property type="entry name" value="Xylose isomerase"/>
    <property type="match status" value="1"/>
</dbReference>
<dbReference type="Gene3D" id="3.20.20.150">
    <property type="entry name" value="Divalent-metal-dependent TIM barrel enzymes"/>
    <property type="match status" value="1"/>
</dbReference>
<dbReference type="HAMAP" id="MF_00455">
    <property type="entry name" value="Xylose_isom_A"/>
    <property type="match status" value="1"/>
</dbReference>
<dbReference type="InterPro" id="IPR036237">
    <property type="entry name" value="Xyl_isomerase-like_sf"/>
</dbReference>
<dbReference type="InterPro" id="IPR013452">
    <property type="entry name" value="Xylose_isom_bac"/>
</dbReference>
<dbReference type="InterPro" id="IPR001998">
    <property type="entry name" value="Xylose_isomerase"/>
</dbReference>
<dbReference type="NCBIfam" id="NF003998">
    <property type="entry name" value="PRK05474.1"/>
    <property type="match status" value="1"/>
</dbReference>
<dbReference type="NCBIfam" id="TIGR02630">
    <property type="entry name" value="xylose_isom_A"/>
    <property type="match status" value="1"/>
</dbReference>
<dbReference type="PANTHER" id="PTHR48408">
    <property type="match status" value="1"/>
</dbReference>
<dbReference type="PANTHER" id="PTHR48408:SF1">
    <property type="entry name" value="XYLOSE ISOMERASE"/>
    <property type="match status" value="1"/>
</dbReference>
<dbReference type="PRINTS" id="PR00688">
    <property type="entry name" value="XYLOSISMRASE"/>
</dbReference>
<dbReference type="SUPFAM" id="SSF51658">
    <property type="entry name" value="Xylose isomerase-like"/>
    <property type="match status" value="1"/>
</dbReference>
<dbReference type="PROSITE" id="PS51415">
    <property type="entry name" value="XYLOSE_ISOMERASE"/>
    <property type="match status" value="1"/>
</dbReference>
<protein>
    <recommendedName>
        <fullName evidence="1">Xylose isomerase</fullName>
        <ecNumber evidence="1">5.3.1.5</ecNumber>
    </recommendedName>
</protein>
<evidence type="ECO:0000255" key="1">
    <source>
        <dbReference type="HAMAP-Rule" id="MF_00455"/>
    </source>
</evidence>
<accession>Q2YMQ2</accession>